<evidence type="ECO:0000255" key="1">
    <source>
        <dbReference type="PROSITE-ProRule" id="PRU00441"/>
    </source>
</evidence>
<evidence type="ECO:0000305" key="2"/>
<comment type="function">
    <text>Part of a binding-protein-dependent transport system for glutamate, glutamine, aspartate and asparagine. Probably responsible for the translocation of the substrate across the membrane.</text>
</comment>
<comment type="subunit">
    <text evidence="2">BztB and BztC form a heterodimer which can form a membrane complex with a homodimer of BztD.</text>
</comment>
<comment type="subcellular location">
    <subcellularLocation>
        <location evidence="2">Cell inner membrane</location>
        <topology evidence="2">Multi-pass membrane protein</topology>
    </subcellularLocation>
</comment>
<comment type="similarity">
    <text evidence="2">Belongs to the binding-protein-dependent transport system permease family. HisMQ subfamily.</text>
</comment>
<reference key="1">
    <citation type="journal article" date="1996" name="Mol. Microbiol.">
        <title>A glutamate/glutamine/aspartate/asparagine transport operon in Rhodobacter capsulatus.</title>
        <authorList>
            <person name="Zheng S."/>
            <person name="Haselkorn R."/>
        </authorList>
    </citation>
    <scope>NUCLEOTIDE SEQUENCE [GENOMIC DNA]</scope>
    <source>
        <strain>ATCC BAA-309 / NBRC 16581 / SB1003</strain>
    </source>
</reference>
<reference key="2">
    <citation type="journal article" date="2010" name="J. Bacteriol.">
        <title>Complete genome sequence of the photosynthetic purple nonsulfur bacterium Rhodobacter capsulatus SB 1003.</title>
        <authorList>
            <person name="Strnad H."/>
            <person name="Lapidus A."/>
            <person name="Paces J."/>
            <person name="Ulbrich P."/>
            <person name="Vlcek C."/>
            <person name="Paces V."/>
            <person name="Haselkorn R."/>
        </authorList>
    </citation>
    <scope>NUCLEOTIDE SEQUENCE [LARGE SCALE GENOMIC DNA]</scope>
    <source>
        <strain>ATCC BAA-309 / NBRC 16581 / SB1003</strain>
    </source>
</reference>
<proteinExistence type="inferred from homology"/>
<organism>
    <name type="scientific">Rhodobacter capsulatus (strain ATCC BAA-309 / NBRC 16581 / SB1003)</name>
    <dbReference type="NCBI Taxonomy" id="272942"/>
    <lineage>
        <taxon>Bacteria</taxon>
        <taxon>Pseudomonadati</taxon>
        <taxon>Pseudomonadota</taxon>
        <taxon>Alphaproteobacteria</taxon>
        <taxon>Rhodobacterales</taxon>
        <taxon>Rhodobacter group</taxon>
        <taxon>Rhodobacter</taxon>
    </lineage>
</organism>
<sequence>MALASDPPKAGFRLSMLIYDTRFRSITIQIVVLLLFLAGLVWLLNNAYVNLEAKGKDFNFSFLWTRAGYDLAQTLIPYSNDDTHFRALIEGLLNTLLVSVLGCILATILGTIIGVLRLSQNWLVARIMTVYVETFRNIPLLLWILLMGTILAETRPVPKDFRLTEAMKAAGEEPKASMWFFDSVAVTNRGTNLPAPAFDHSLGVVDLGWNLPVSLNALAILAVMSASFWGWRRFMARAKAVQEATGTRPTTWWPSLLILFAPISALLYGLGFHLDYPQITKFDFTGGFQMLHSFTALLIALTLYTAAFIAEIVRAGIQAISRGQTEAAYALGLRPGRTMSLVILPQALRVIVPPLISQFLNLTKNSSLAIAVSYMDLRGTLGGITLNQTGRELECMLLMMLIYLTISLTISSLMNLYNKSIKLKER</sequence>
<feature type="chain" id="PRO_0000059985" description="Glutamate/glutamine/aspartate/asparagine transport system permease protein BztB">
    <location>
        <begin position="1"/>
        <end position="426"/>
    </location>
</feature>
<feature type="transmembrane region" description="Helical" evidence="1">
    <location>
        <begin position="25"/>
        <end position="45"/>
    </location>
</feature>
<feature type="transmembrane region" description="Helical" evidence="1">
    <location>
        <begin position="96"/>
        <end position="116"/>
    </location>
</feature>
<feature type="transmembrane region" description="Helical" evidence="1">
    <location>
        <begin position="132"/>
        <end position="152"/>
    </location>
</feature>
<feature type="transmembrane region" description="Helical" evidence="1">
    <location>
        <begin position="211"/>
        <end position="231"/>
    </location>
</feature>
<feature type="transmembrane region" description="Helical" evidence="1">
    <location>
        <begin position="252"/>
        <end position="272"/>
    </location>
</feature>
<feature type="transmembrane region" description="Helical" evidence="1">
    <location>
        <begin position="293"/>
        <end position="313"/>
    </location>
</feature>
<feature type="transmembrane region" description="Helical" evidence="1">
    <location>
        <begin position="340"/>
        <end position="360"/>
    </location>
</feature>
<feature type="transmembrane region" description="Helical" evidence="1">
    <location>
        <begin position="396"/>
        <end position="416"/>
    </location>
</feature>
<feature type="domain" description="ABC transmembrane type-1" evidence="1">
    <location>
        <begin position="92"/>
        <end position="414"/>
    </location>
</feature>
<dbReference type="EMBL" id="U37407">
    <property type="protein sequence ID" value="AAB17887.1"/>
    <property type="molecule type" value="Genomic_DNA"/>
</dbReference>
<dbReference type="EMBL" id="CP001312">
    <property type="protein sequence ID" value="ADE84101.1"/>
    <property type="molecule type" value="Genomic_DNA"/>
</dbReference>
<dbReference type="PIR" id="S77606">
    <property type="entry name" value="S77606"/>
</dbReference>
<dbReference type="RefSeq" id="WP_013066081.1">
    <property type="nucleotide sequence ID" value="NC_014034.1"/>
</dbReference>
<dbReference type="STRING" id="272942.RCAP_rcc00336"/>
<dbReference type="TCDB" id="3.A.1.3.7">
    <property type="family name" value="the atp-binding cassette (abc) superfamily"/>
</dbReference>
<dbReference type="GeneID" id="31489293"/>
<dbReference type="KEGG" id="rcp:RCAP_rcc00336"/>
<dbReference type="eggNOG" id="COG4597">
    <property type="taxonomic scope" value="Bacteria"/>
</dbReference>
<dbReference type="HOGENOM" id="CLU_019602_8_0_5"/>
<dbReference type="OrthoDB" id="9808531at2"/>
<dbReference type="Proteomes" id="UP000002361">
    <property type="component" value="Chromosome"/>
</dbReference>
<dbReference type="GO" id="GO:0043190">
    <property type="term" value="C:ATP-binding cassette (ABC) transporter complex"/>
    <property type="evidence" value="ECO:0007669"/>
    <property type="project" value="InterPro"/>
</dbReference>
<dbReference type="GO" id="GO:0022857">
    <property type="term" value="F:transmembrane transporter activity"/>
    <property type="evidence" value="ECO:0007669"/>
    <property type="project" value="InterPro"/>
</dbReference>
<dbReference type="GO" id="GO:0006865">
    <property type="term" value="P:amino acid transport"/>
    <property type="evidence" value="ECO:0007669"/>
    <property type="project" value="UniProtKB-KW"/>
</dbReference>
<dbReference type="CDD" id="cd06261">
    <property type="entry name" value="TM_PBP2"/>
    <property type="match status" value="1"/>
</dbReference>
<dbReference type="Gene3D" id="1.10.3720.10">
    <property type="entry name" value="MetI-like"/>
    <property type="match status" value="2"/>
</dbReference>
<dbReference type="InterPro" id="IPR010065">
    <property type="entry name" value="AA_ABC_transptr_permease_3TM"/>
</dbReference>
<dbReference type="InterPro" id="IPR043429">
    <property type="entry name" value="ArtM/GltK/GlnP/TcyL/YhdX-like"/>
</dbReference>
<dbReference type="InterPro" id="IPR000515">
    <property type="entry name" value="MetI-like"/>
</dbReference>
<dbReference type="InterPro" id="IPR035906">
    <property type="entry name" value="MetI-like_sf"/>
</dbReference>
<dbReference type="NCBIfam" id="TIGR01726">
    <property type="entry name" value="HEQRo_perm_3TM"/>
    <property type="match status" value="1"/>
</dbReference>
<dbReference type="PANTHER" id="PTHR30614:SF37">
    <property type="entry name" value="AMINO-ACID ABC TRANSPORTER PERMEASE PROTEIN YHDX-RELATED"/>
    <property type="match status" value="1"/>
</dbReference>
<dbReference type="PANTHER" id="PTHR30614">
    <property type="entry name" value="MEMBRANE COMPONENT OF AMINO ACID ABC TRANSPORTER"/>
    <property type="match status" value="1"/>
</dbReference>
<dbReference type="Pfam" id="PF00528">
    <property type="entry name" value="BPD_transp_1"/>
    <property type="match status" value="1"/>
</dbReference>
<dbReference type="SUPFAM" id="SSF161098">
    <property type="entry name" value="MetI-like"/>
    <property type="match status" value="2"/>
</dbReference>
<dbReference type="PROSITE" id="PS50928">
    <property type="entry name" value="ABC_TM1"/>
    <property type="match status" value="1"/>
</dbReference>
<keyword id="KW-0029">Amino-acid transport</keyword>
<keyword id="KW-0997">Cell inner membrane</keyword>
<keyword id="KW-1003">Cell membrane</keyword>
<keyword id="KW-0472">Membrane</keyword>
<keyword id="KW-1185">Reference proteome</keyword>
<keyword id="KW-0812">Transmembrane</keyword>
<keyword id="KW-1133">Transmembrane helix</keyword>
<keyword id="KW-0813">Transport</keyword>
<gene>
    <name type="primary">bztB</name>
    <name type="ordered locus">RCAP_rcc00336</name>
</gene>
<accession>Q52664</accession>
<accession>D5AM31</accession>
<name>BZTB_RHOCB</name>
<protein>
    <recommendedName>
        <fullName>Glutamate/glutamine/aspartate/asparagine transport system permease protein BztB</fullName>
    </recommendedName>
</protein>